<reference key="1">
    <citation type="journal article" date="2001" name="Biochem. Biophys. Res. Commun.">
        <title>A gonadotropin-releasing hormone (GnRH) receptor specific for GnRH II in primates.</title>
        <authorList>
            <person name="Neill J.D."/>
            <person name="Duck L.W."/>
            <person name="Sellers J.C."/>
            <person name="Musgrove L.C."/>
        </authorList>
    </citation>
    <scope>NUCLEOTIDE SEQUENCE [MRNA]</scope>
    <source>
        <tissue>Pituitary anterior lobe</tissue>
    </source>
</reference>
<protein>
    <recommendedName>
        <fullName>Gonadotropin-releasing hormone II receptor</fullName>
        <shortName>GnRH II receptor</shortName>
        <shortName>GnRH-II-R</shortName>
    </recommendedName>
    <alternativeName>
        <fullName>Type II GnRH receptor</fullName>
    </alternativeName>
</protein>
<proteinExistence type="evidence at transcript level"/>
<feature type="chain" id="PRO_0000069498" description="Gonadotropin-releasing hormone II receptor">
    <location>
        <begin position="1"/>
        <end position="379"/>
    </location>
</feature>
<feature type="topological domain" description="Extracellular" evidence="1">
    <location>
        <begin position="1"/>
        <end position="40"/>
    </location>
</feature>
<feature type="transmembrane region" description="Helical; Name=1" evidence="1">
    <location>
        <begin position="41"/>
        <end position="60"/>
    </location>
</feature>
<feature type="topological domain" description="Cytoplasmic" evidence="1">
    <location>
        <begin position="61"/>
        <end position="76"/>
    </location>
</feature>
<feature type="transmembrane region" description="Helical; Name=2" evidence="1">
    <location>
        <begin position="77"/>
        <end position="96"/>
    </location>
</feature>
<feature type="topological domain" description="Extracellular" evidence="1">
    <location>
        <begin position="97"/>
        <end position="114"/>
    </location>
</feature>
<feature type="transmembrane region" description="Helical; Name=3" evidence="1">
    <location>
        <begin position="115"/>
        <end position="136"/>
    </location>
</feature>
<feature type="topological domain" description="Cytoplasmic" evidence="1">
    <location>
        <begin position="137"/>
        <end position="160"/>
    </location>
</feature>
<feature type="transmembrane region" description="Helical; Name=4" evidence="1">
    <location>
        <begin position="161"/>
        <end position="178"/>
    </location>
</feature>
<feature type="topological domain" description="Extracellular" evidence="1">
    <location>
        <begin position="179"/>
        <end position="204"/>
    </location>
</feature>
<feature type="transmembrane region" description="Helical; Name=5" evidence="1">
    <location>
        <begin position="205"/>
        <end position="224"/>
    </location>
</feature>
<feature type="topological domain" description="Cytoplasmic" evidence="1">
    <location>
        <begin position="225"/>
        <end position="278"/>
    </location>
</feature>
<feature type="transmembrane region" description="Helical; Name=6" evidence="1">
    <location>
        <begin position="279"/>
        <end position="297"/>
    </location>
</feature>
<feature type="topological domain" description="Extracellular" evidence="1">
    <location>
        <begin position="298"/>
        <end position="303"/>
    </location>
</feature>
<feature type="transmembrane region" description="Helical; Name=7" evidence="1">
    <location>
        <begin position="304"/>
        <end position="323"/>
    </location>
</feature>
<feature type="topological domain" description="Cytoplasmic" evidence="1">
    <location>
        <begin position="324"/>
        <end position="379"/>
    </location>
</feature>
<feature type="glycosylation site" description="N-linked (GlcNAc...) asparagine" evidence="1">
    <location>
        <position position="101"/>
    </location>
</feature>
<feature type="disulfide bond" evidence="2">
    <location>
        <begin position="113"/>
        <end position="188"/>
    </location>
</feature>
<organism>
    <name type="scientific">Macaca mulatta</name>
    <name type="common">Rhesus macaque</name>
    <dbReference type="NCBI Taxonomy" id="9544"/>
    <lineage>
        <taxon>Eukaryota</taxon>
        <taxon>Metazoa</taxon>
        <taxon>Chordata</taxon>
        <taxon>Craniata</taxon>
        <taxon>Vertebrata</taxon>
        <taxon>Euteleostomi</taxon>
        <taxon>Mammalia</taxon>
        <taxon>Eutheria</taxon>
        <taxon>Euarchontoglires</taxon>
        <taxon>Primates</taxon>
        <taxon>Haplorrhini</taxon>
        <taxon>Catarrhini</taxon>
        <taxon>Cercopithecidae</taxon>
        <taxon>Cercopithecinae</taxon>
        <taxon>Macaca</taxon>
    </lineage>
</organism>
<comment type="function">
    <text>Receptor for gonadotropin releasing hormone II (GnRH II). This receptor mediates its action by association with G proteins that activate a phosphatidylinositol-calcium second messenger system.</text>
</comment>
<comment type="subcellular location">
    <subcellularLocation>
        <location>Cell membrane</location>
        <topology>Multi-pass membrane protein</topology>
    </subcellularLocation>
</comment>
<comment type="PTM">
    <text evidence="3">Phosphorylated on the C-terminal cytoplasmic tail.</text>
</comment>
<comment type="similarity">
    <text evidence="2">Belongs to the G-protein coupled receptor 1 family.</text>
</comment>
<keyword id="KW-1003">Cell membrane</keyword>
<keyword id="KW-1015">Disulfide bond</keyword>
<keyword id="KW-0297">G-protein coupled receptor</keyword>
<keyword id="KW-0325">Glycoprotein</keyword>
<keyword id="KW-0472">Membrane</keyword>
<keyword id="KW-0597">Phosphoprotein</keyword>
<keyword id="KW-0675">Receptor</keyword>
<keyword id="KW-1185">Reference proteome</keyword>
<keyword id="KW-0807">Transducer</keyword>
<keyword id="KW-0812">Transmembrane</keyword>
<keyword id="KW-1133">Transmembrane helix</keyword>
<gene>
    <name type="primary">GNRHR2</name>
</gene>
<name>GNRR2_MACMU</name>
<sequence>MSAGNGTPWGSAAGEESWAASGVAVEGSELPTFSAAAKVRVGVTIVLFVSSAGGNLAVLWSVTRPQPSQLRPSPVRTLFAHLAAADLLVTFVVMPLDATWNITVQWLAEDIACRTLMFLKLMAMYSAAFLPVVIGLDRQAAVLNPLGSRSGVRKLLGAAWGLSFLLALPQLFLFHTVHRAGPVPFTQCVTKGSFKARWQETTYNLFTFRCLFLLPLTAMAICYSHIVLSVSSPQTRKGSHAPAGEFALCRSFDNCPRVRLWALRLALLILLTFILCWTPYYLLGLWYWFSPTMLTEVPPSLSHILFLFGLLNAPLDPLLYGAFTLGCQRGHQELSIDSSNEGSGRMLQQEIHALRQQEVQKTVTSRSAGETKDISITSI</sequence>
<evidence type="ECO:0000255" key="1"/>
<evidence type="ECO:0000255" key="2">
    <source>
        <dbReference type="PROSITE-ProRule" id="PRU00521"/>
    </source>
</evidence>
<evidence type="ECO:0000305" key="3"/>
<accession>Q95JG1</accession>
<dbReference type="EMBL" id="AF353987">
    <property type="protein sequence ID" value="AAK52745.1"/>
    <property type="molecule type" value="mRNA"/>
</dbReference>
<dbReference type="RefSeq" id="NP_001028014.1">
    <property type="nucleotide sequence ID" value="NM_001032842.1"/>
</dbReference>
<dbReference type="RefSeq" id="XP_015005499.1">
    <property type="nucleotide sequence ID" value="XM_015150013.1"/>
</dbReference>
<dbReference type="SMR" id="Q95JG1"/>
<dbReference type="FunCoup" id="Q95JG1">
    <property type="interactions" value="525"/>
</dbReference>
<dbReference type="STRING" id="9544.ENSMMUP00000021109"/>
<dbReference type="GlyCosmos" id="Q95JG1">
    <property type="glycosylation" value="1 site, No reported glycans"/>
</dbReference>
<dbReference type="PaxDb" id="9544-ENSMMUP00000021109"/>
<dbReference type="GeneID" id="574163"/>
<dbReference type="KEGG" id="mcc:574163"/>
<dbReference type="CTD" id="114814"/>
<dbReference type="eggNOG" id="KOG3656">
    <property type="taxonomic scope" value="Eukaryota"/>
</dbReference>
<dbReference type="HOGENOM" id="CLU_009579_15_2_1"/>
<dbReference type="InParanoid" id="Q95JG1"/>
<dbReference type="OrthoDB" id="6022667at2759"/>
<dbReference type="TreeFam" id="TF106499"/>
<dbReference type="Proteomes" id="UP000006718">
    <property type="component" value="Unassembled WGS sequence"/>
</dbReference>
<dbReference type="GO" id="GO:0005886">
    <property type="term" value="C:plasma membrane"/>
    <property type="evidence" value="ECO:0000318"/>
    <property type="project" value="GO_Central"/>
</dbReference>
<dbReference type="GO" id="GO:0004968">
    <property type="term" value="F:gonadotropin-releasing hormone receptor activity"/>
    <property type="evidence" value="ECO:0000318"/>
    <property type="project" value="GO_Central"/>
</dbReference>
<dbReference type="GO" id="GO:0032870">
    <property type="term" value="P:cellular response to hormone stimulus"/>
    <property type="evidence" value="ECO:0000318"/>
    <property type="project" value="GO_Central"/>
</dbReference>
<dbReference type="GO" id="GO:0007186">
    <property type="term" value="P:G protein-coupled receptor signaling pathway"/>
    <property type="evidence" value="ECO:0000318"/>
    <property type="project" value="GO_Central"/>
</dbReference>
<dbReference type="CDD" id="cd15383">
    <property type="entry name" value="7tmA_GnRHR_vertebrate"/>
    <property type="match status" value="1"/>
</dbReference>
<dbReference type="FunFam" id="1.20.1070.10:FF:000199">
    <property type="entry name" value="Gonadotropin-releasing hormone II receptor"/>
    <property type="match status" value="1"/>
</dbReference>
<dbReference type="Gene3D" id="1.20.1070.10">
    <property type="entry name" value="Rhodopsin 7-helix transmembrane proteins"/>
    <property type="match status" value="1"/>
</dbReference>
<dbReference type="InterPro" id="IPR000276">
    <property type="entry name" value="GPCR_Rhodpsn"/>
</dbReference>
<dbReference type="InterPro" id="IPR017452">
    <property type="entry name" value="GPCR_Rhodpsn_7TM"/>
</dbReference>
<dbReference type="InterPro" id="IPR001658">
    <property type="entry name" value="GphnRH_fam_rcpt"/>
</dbReference>
<dbReference type="PANTHER" id="PTHR24241:SF69">
    <property type="entry name" value="GONADOTROPIN-RELEASING HORMONE II RECEPTOR-RELATED"/>
    <property type="match status" value="1"/>
</dbReference>
<dbReference type="PANTHER" id="PTHR24241">
    <property type="entry name" value="NEUROPEPTIDE RECEPTOR-RELATED G-PROTEIN COUPLED RECEPTOR"/>
    <property type="match status" value="1"/>
</dbReference>
<dbReference type="Pfam" id="PF00001">
    <property type="entry name" value="7tm_1"/>
    <property type="match status" value="1"/>
</dbReference>
<dbReference type="PRINTS" id="PR00529">
    <property type="entry name" value="GNADOTRPHINR"/>
</dbReference>
<dbReference type="PRINTS" id="PR00237">
    <property type="entry name" value="GPCRRHODOPSN"/>
</dbReference>
<dbReference type="SUPFAM" id="SSF81321">
    <property type="entry name" value="Family A G protein-coupled receptor-like"/>
    <property type="match status" value="1"/>
</dbReference>
<dbReference type="PROSITE" id="PS50262">
    <property type="entry name" value="G_PROTEIN_RECEP_F1_2"/>
    <property type="match status" value="1"/>
</dbReference>